<accession>P54659</accession>
<accession>Q54F22</accession>
<organism>
    <name type="scientific">Dictyostelium discoideum</name>
    <name type="common">Social amoeba</name>
    <dbReference type="NCBI Taxonomy" id="44689"/>
    <lineage>
        <taxon>Eukaryota</taxon>
        <taxon>Amoebozoa</taxon>
        <taxon>Evosea</taxon>
        <taxon>Eumycetozoa</taxon>
        <taxon>Dictyostelia</taxon>
        <taxon>Dictyosteliales</taxon>
        <taxon>Dictyosteliaceae</taxon>
        <taxon>Dictyostelium</taxon>
    </lineage>
</organism>
<keyword id="KW-0007">Acetylation</keyword>
<keyword id="KW-0963">Cytoplasm</keyword>
<keyword id="KW-0903">Direct protein sequencing</keyword>
<keyword id="KW-0539">Nucleus</keyword>
<keyword id="KW-1185">Reference proteome</keyword>
<keyword id="KW-0677">Repeat</keyword>
<keyword id="KW-0687">Ribonucleoprotein</keyword>
<sequence>MATPVQASTVIRVKPHHYIHVLDNNTNVTRVEVGPQTFTRQDHERVLNPTPLPMILIPPRQYCIIENPIIRDKEGKLVVDKFNQPKLRHGDQEIRFSQDPFPLYPGEVVIAQPVPLQVIQTNSALRLKCLRDFVEVKADKTTVSHIAGDEWLFEGPGTYYPRVEVQVVEPVRAVIIKENQALKLRARLSFVDRRDVVRQVGEEWLVRESGAYLPGVSEEIVGFIQALVLTDRIAYQLLATRSFTDSFGKVRKAGEEWIITQKDCDTYIPDVNEKVIRDIKAITLTNRQYCIVENPIDPKTGKNKLGHKELLQGDRTFFLMPGESLVKGIQNVNVLSEDEALLLSAKEEFVEKKGTTTIVHKPGDLWMIYGPCDYIPPIQVDVVERRKRIPLDVNEGIYVRDIKTGKVRSVHGSSYMLLPNEERWAKPLAPIVEELLKKSASRDQNEEHNESDRDSTKVITYRVPHNAAVQIFDYRKKEARVVFGPELVMLEPDEEFTVLSLSGKIPKRPNHIRSLALFLGPDFMTDLITVETADHARLSLKLSYNWHFKVEQDNPSKLFATSDFTGDLCKATGSLVRAAVAASTFDNFHKHSSDIIQQAVFGSTDGSSNDCLYFETNGLVITNIDVQSVEPVDQRTLDSLQKSVQLAIEITTKSQEATARQEAERLEQMARGELERQKIIDEAKNEESRSKLVQLQAQSAAVESTGQAVAEARARAEAAIIEAESEIKQARLSTRAIEIEALSEIENLKAKHIVEIQHIKSLNNLELIKAKESATIETTKFENYVEALGSDTIKSIAQAPEETKAKLLAGLGLKSFMITDGKSPLNLFDTANGLIADAQRSEVDEE</sequence>
<name>MVPB_DICDI</name>
<reference key="1">
    <citation type="journal article" date="1995" name="J. Biol. Chem.">
        <title>Dictyostelium vaults: disruption of the major proteins reveals growth and morphological defects and uncovers a new associated protein.</title>
        <authorList>
            <person name="Vasu S.K."/>
            <person name="Rome L.H."/>
        </authorList>
    </citation>
    <scope>NUCLEOTIDE SEQUENCE [MRNA]</scope>
    <source>
        <strain>AX4</strain>
    </source>
</reference>
<reference key="2">
    <citation type="journal article" date="2005" name="Nature">
        <title>The genome of the social amoeba Dictyostelium discoideum.</title>
        <authorList>
            <person name="Eichinger L."/>
            <person name="Pachebat J.A."/>
            <person name="Gloeckner G."/>
            <person name="Rajandream M.A."/>
            <person name="Sucgang R."/>
            <person name="Berriman M."/>
            <person name="Song J."/>
            <person name="Olsen R."/>
            <person name="Szafranski K."/>
            <person name="Xu Q."/>
            <person name="Tunggal B."/>
            <person name="Kummerfeld S."/>
            <person name="Madera M."/>
            <person name="Konfortov B.A."/>
            <person name="Rivero F."/>
            <person name="Bankier A.T."/>
            <person name="Lehmann R."/>
            <person name="Hamlin N."/>
            <person name="Davies R."/>
            <person name="Gaudet P."/>
            <person name="Fey P."/>
            <person name="Pilcher K."/>
            <person name="Chen G."/>
            <person name="Saunders D."/>
            <person name="Sodergren E.J."/>
            <person name="Davis P."/>
            <person name="Kerhornou A."/>
            <person name="Nie X."/>
            <person name="Hall N."/>
            <person name="Anjard C."/>
            <person name="Hemphill L."/>
            <person name="Bason N."/>
            <person name="Farbrother P."/>
            <person name="Desany B."/>
            <person name="Just E."/>
            <person name="Morio T."/>
            <person name="Rost R."/>
            <person name="Churcher C.M."/>
            <person name="Cooper J."/>
            <person name="Haydock S."/>
            <person name="van Driessche N."/>
            <person name="Cronin A."/>
            <person name="Goodhead I."/>
            <person name="Muzny D.M."/>
            <person name="Mourier T."/>
            <person name="Pain A."/>
            <person name="Lu M."/>
            <person name="Harper D."/>
            <person name="Lindsay R."/>
            <person name="Hauser H."/>
            <person name="James K.D."/>
            <person name="Quiles M."/>
            <person name="Madan Babu M."/>
            <person name="Saito T."/>
            <person name="Buchrieser C."/>
            <person name="Wardroper A."/>
            <person name="Felder M."/>
            <person name="Thangavelu M."/>
            <person name="Johnson D."/>
            <person name="Knights A."/>
            <person name="Loulseged H."/>
            <person name="Mungall K.L."/>
            <person name="Oliver K."/>
            <person name="Price C."/>
            <person name="Quail M.A."/>
            <person name="Urushihara H."/>
            <person name="Hernandez J."/>
            <person name="Rabbinowitsch E."/>
            <person name="Steffen D."/>
            <person name="Sanders M."/>
            <person name="Ma J."/>
            <person name="Kohara Y."/>
            <person name="Sharp S."/>
            <person name="Simmonds M.N."/>
            <person name="Spiegler S."/>
            <person name="Tivey A."/>
            <person name="Sugano S."/>
            <person name="White B."/>
            <person name="Walker D."/>
            <person name="Woodward J.R."/>
            <person name="Winckler T."/>
            <person name="Tanaka Y."/>
            <person name="Shaulsky G."/>
            <person name="Schleicher M."/>
            <person name="Weinstock G.M."/>
            <person name="Rosenthal A."/>
            <person name="Cox E.C."/>
            <person name="Chisholm R.L."/>
            <person name="Gibbs R.A."/>
            <person name="Loomis W.F."/>
            <person name="Platzer M."/>
            <person name="Kay R.R."/>
            <person name="Williams J.G."/>
            <person name="Dear P.H."/>
            <person name="Noegel A.A."/>
            <person name="Barrell B.G."/>
            <person name="Kuspa A."/>
        </authorList>
    </citation>
    <scope>NUCLEOTIDE SEQUENCE [LARGE SCALE GENOMIC DNA]</scope>
    <source>
        <strain>AX4</strain>
    </source>
</reference>
<reference key="3">
    <citation type="submission" date="2007-07" db="UniProtKB">
        <authorList>
            <person name="Bienvenut W.V."/>
            <person name="Patel H."/>
            <person name="Brunton V.G."/>
            <person name="Frame M.C."/>
        </authorList>
    </citation>
    <scope>PROTEIN SEQUENCE OF 2-12; 31-40; 163-172; 199-207; 233-241; 316-327; 389-400; 427-437; 463-475; 542-549; 578-590; 692-713; 795-804 AND 815-822</scope>
    <scope>CLEAVAGE OF INITIATOR METHIONINE</scope>
    <scope>ACETYLATION AT ALA-2</scope>
    <scope>IDENTIFICATION BY MASS SPECTROMETRY</scope>
</reference>
<reference key="4">
    <citation type="journal article" date="2006" name="Mol. Cell. Proteomics">
        <title>Proteomics fingerprinting of phagosome maturation and evidence for the role of a Galpha during uptake.</title>
        <authorList>
            <person name="Gotthardt D."/>
            <person name="Blancheteau V."/>
            <person name="Bosserhoff A."/>
            <person name="Ruppert T."/>
            <person name="Delorenzi M."/>
            <person name="Soldati T."/>
        </authorList>
    </citation>
    <scope>IDENTIFICATION BY MASS SPECTROMETRY [LARGE SCALE ANALYSIS]</scope>
    <source>
        <strain>AX2</strain>
    </source>
</reference>
<protein>
    <recommendedName>
        <fullName>Major vault protein beta</fullName>
        <shortName>MVP-beta</shortName>
    </recommendedName>
</protein>
<dbReference type="EMBL" id="Z37109">
    <property type="protein sequence ID" value="CAA85473.1"/>
    <property type="molecule type" value="mRNA"/>
</dbReference>
<dbReference type="EMBL" id="AAFI02000175">
    <property type="protein sequence ID" value="EAL61847.1"/>
    <property type="molecule type" value="Genomic_DNA"/>
</dbReference>
<dbReference type="PIR" id="A57241">
    <property type="entry name" value="A57241"/>
</dbReference>
<dbReference type="RefSeq" id="XP_635368.1">
    <property type="nucleotide sequence ID" value="XM_630276.1"/>
</dbReference>
<dbReference type="SMR" id="P54659"/>
<dbReference type="FunCoup" id="P54659">
    <property type="interactions" value="3"/>
</dbReference>
<dbReference type="STRING" id="44689.P54659"/>
<dbReference type="PaxDb" id="44689-DDB0191337"/>
<dbReference type="EnsemblProtists" id="EAL61847">
    <property type="protein sequence ID" value="EAL61847"/>
    <property type="gene ID" value="DDB_G0291127"/>
</dbReference>
<dbReference type="GeneID" id="8628016"/>
<dbReference type="KEGG" id="ddi:DDB_G0291127"/>
<dbReference type="dictyBase" id="DDB_G0291127">
    <property type="gene designation" value="mvpB"/>
</dbReference>
<dbReference type="VEuPathDB" id="AmoebaDB:DDB_G0291127"/>
<dbReference type="eggNOG" id="ENOG502QPP0">
    <property type="taxonomic scope" value="Eukaryota"/>
</dbReference>
<dbReference type="HOGENOM" id="CLU_016171_0_0_1"/>
<dbReference type="InParanoid" id="P54659"/>
<dbReference type="OMA" id="PKRPNHI"/>
<dbReference type="PhylomeDB" id="P54659"/>
<dbReference type="PRO" id="PR:P54659"/>
<dbReference type="Proteomes" id="UP000002195">
    <property type="component" value="Chromosome 5"/>
</dbReference>
<dbReference type="GO" id="GO:0005737">
    <property type="term" value="C:cytoplasm"/>
    <property type="evidence" value="ECO:0000318"/>
    <property type="project" value="GO_Central"/>
</dbReference>
<dbReference type="GO" id="GO:0031012">
    <property type="term" value="C:extracellular matrix"/>
    <property type="evidence" value="ECO:0007005"/>
    <property type="project" value="dictyBase"/>
</dbReference>
<dbReference type="GO" id="GO:0005634">
    <property type="term" value="C:nucleus"/>
    <property type="evidence" value="ECO:0000314"/>
    <property type="project" value="dictyBase"/>
</dbReference>
<dbReference type="GO" id="GO:0045335">
    <property type="term" value="C:phagocytic vesicle"/>
    <property type="evidence" value="ECO:0007005"/>
    <property type="project" value="dictyBase"/>
</dbReference>
<dbReference type="GO" id="GO:1990904">
    <property type="term" value="C:ribonucleoprotein complex"/>
    <property type="evidence" value="ECO:0000304"/>
    <property type="project" value="dictyBase"/>
</dbReference>
<dbReference type="CDD" id="cd08825">
    <property type="entry name" value="MVP_shoulder"/>
    <property type="match status" value="1"/>
</dbReference>
<dbReference type="FunFam" id="2.30.30.550:FF:000006">
    <property type="entry name" value="Major vault protein beta"/>
    <property type="match status" value="1"/>
</dbReference>
<dbReference type="FunFam" id="2.30.30.560:FF:000002">
    <property type="entry name" value="Major vault protein-alpha"/>
    <property type="match status" value="1"/>
</dbReference>
<dbReference type="FunFam" id="2.30.30.570:FF:000002">
    <property type="entry name" value="Major vault protein-alpha"/>
    <property type="match status" value="1"/>
</dbReference>
<dbReference type="FunFam" id="2.30.30.550:FF:000001">
    <property type="entry name" value="major vault protein-like"/>
    <property type="match status" value="3"/>
</dbReference>
<dbReference type="FunFam" id="2.30.30.560:FF:000001">
    <property type="entry name" value="major vault protein-like"/>
    <property type="match status" value="1"/>
</dbReference>
<dbReference type="FunFam" id="2.30.30.570:FF:000001">
    <property type="entry name" value="major vault protein-like"/>
    <property type="match status" value="1"/>
</dbReference>
<dbReference type="FunFam" id="3.30.479.30:FF:000010">
    <property type="entry name" value="major vault protein-like"/>
    <property type="match status" value="1"/>
</dbReference>
<dbReference type="Gene3D" id="2.30.30.560">
    <property type="match status" value="2"/>
</dbReference>
<dbReference type="Gene3D" id="2.30.30.570">
    <property type="match status" value="2"/>
</dbReference>
<dbReference type="Gene3D" id="2.30.30.620">
    <property type="match status" value="1"/>
</dbReference>
<dbReference type="Gene3D" id="6.10.250.720">
    <property type="match status" value="1"/>
</dbReference>
<dbReference type="Gene3D" id="6.20.380.10">
    <property type="match status" value="1"/>
</dbReference>
<dbReference type="Gene3D" id="3.30.479.30">
    <property type="entry name" value="Band 7 domain"/>
    <property type="match status" value="1"/>
</dbReference>
<dbReference type="Gene3D" id="2.30.30.550">
    <property type="entry name" value="Major Vault Protein repeat"/>
    <property type="match status" value="4"/>
</dbReference>
<dbReference type="InterPro" id="IPR036013">
    <property type="entry name" value="Band_7/SPFH_dom_sf"/>
</dbReference>
<dbReference type="InterPro" id="IPR039059">
    <property type="entry name" value="MVP"/>
</dbReference>
<dbReference type="InterPro" id="IPR041139">
    <property type="entry name" value="MVP_rep_dom"/>
</dbReference>
<dbReference type="InterPro" id="IPR043023">
    <property type="entry name" value="MVP_rep_sf"/>
</dbReference>
<dbReference type="InterPro" id="IPR021870">
    <property type="entry name" value="MVP_shoulder"/>
</dbReference>
<dbReference type="InterPro" id="IPR041134">
    <property type="entry name" value="Vault_2"/>
</dbReference>
<dbReference type="InterPro" id="IPR043179">
    <property type="entry name" value="Vault_2_sf"/>
</dbReference>
<dbReference type="InterPro" id="IPR040989">
    <property type="entry name" value="Vault_3"/>
</dbReference>
<dbReference type="InterPro" id="IPR041136">
    <property type="entry name" value="Vault_4"/>
</dbReference>
<dbReference type="InterPro" id="IPR002499">
    <property type="entry name" value="Vault_N"/>
</dbReference>
<dbReference type="PANTHER" id="PTHR14165">
    <property type="entry name" value="MAJOR VAULT PROTEIN"/>
    <property type="match status" value="1"/>
</dbReference>
<dbReference type="PANTHER" id="PTHR14165:SF11">
    <property type="entry name" value="MAJOR VAULT PROTEIN BETA"/>
    <property type="match status" value="1"/>
</dbReference>
<dbReference type="Pfam" id="PF11978">
    <property type="entry name" value="MVP_shoulder"/>
    <property type="match status" value="1"/>
</dbReference>
<dbReference type="Pfam" id="PF01505">
    <property type="entry name" value="Vault"/>
    <property type="match status" value="4"/>
</dbReference>
<dbReference type="Pfam" id="PF17794">
    <property type="entry name" value="Vault_2"/>
    <property type="match status" value="2"/>
</dbReference>
<dbReference type="Pfam" id="PF17795">
    <property type="entry name" value="Vault_3"/>
    <property type="match status" value="1"/>
</dbReference>
<dbReference type="Pfam" id="PF17796">
    <property type="entry name" value="Vault_4"/>
    <property type="match status" value="1"/>
</dbReference>
<dbReference type="PROSITE" id="PS51224">
    <property type="entry name" value="MVP"/>
    <property type="match status" value="8"/>
</dbReference>
<comment type="function">
    <text>Unknown, though MVP-beta is required for normal vault structure.</text>
</comment>
<comment type="subunit">
    <text>The vault ribonucleoprotein particle is a huge (400 A x 670 A) cage structure of 12.9 MDa. It consists of a dimer of half-vaults, with each half-vault comprising 39 identical major vault protein (MVP) chains. Dictyostelium is one of the few organisms in which the major component is actually two proteins (alpha and beta).</text>
</comment>
<comment type="subcellular location">
    <subcellularLocation>
        <location>Cytoplasm</location>
    </subcellularLocation>
    <subcellularLocation>
        <location evidence="1">Nucleus</location>
    </subcellularLocation>
</comment>
<proteinExistence type="evidence at protein level"/>
<feature type="initiator methionine" description="Removed" evidence="2">
    <location>
        <position position="1"/>
    </location>
</feature>
<feature type="chain" id="PRO_0000158986" description="Major vault protein beta">
    <location>
        <begin position="2"/>
        <end position="846"/>
    </location>
</feature>
<feature type="repeat" description="MVP 1">
    <location>
        <begin position="2"/>
        <end position="60"/>
    </location>
</feature>
<feature type="repeat" description="MVP 2">
    <location>
        <begin position="61"/>
        <end position="115"/>
    </location>
</feature>
<feature type="repeat" description="MVP 3">
    <location>
        <begin position="116"/>
        <end position="172"/>
    </location>
</feature>
<feature type="repeat" description="MVP 4">
    <location>
        <begin position="173"/>
        <end position="225"/>
    </location>
</feature>
<feature type="repeat" description="MVP 5">
    <location>
        <begin position="226"/>
        <end position="280"/>
    </location>
</feature>
<feature type="repeat" description="MVP 6">
    <location>
        <begin position="281"/>
        <end position="332"/>
    </location>
</feature>
<feature type="repeat" description="MVP 7">
    <location>
        <begin position="333"/>
        <end position="388"/>
    </location>
</feature>
<feature type="repeat" description="MVP 8">
    <location>
        <begin position="389"/>
        <end position="458"/>
    </location>
</feature>
<feature type="repeat" description="MVP 9">
    <location>
        <begin position="459"/>
        <end position="521"/>
    </location>
</feature>
<feature type="modified residue" description="N-acetylalanine" evidence="2">
    <location>
        <position position="2"/>
    </location>
</feature>
<evidence type="ECO:0000250" key="1"/>
<evidence type="ECO:0000269" key="2">
    <source ref="3"/>
</evidence>
<gene>
    <name type="primary">mvpB</name>
    <name type="ORF">DDB_G0291127</name>
</gene>